<feature type="chain" id="PRO_0000127880" description="Uncharacterized protein AF_0476">
    <location>
        <begin position="1"/>
        <end position="79"/>
    </location>
</feature>
<feature type="domain" description="SpoVT-AbrB" evidence="1">
    <location>
        <begin position="10"/>
        <end position="60"/>
    </location>
</feature>
<gene>
    <name type="ordered locus">AF_0476</name>
</gene>
<reference key="1">
    <citation type="journal article" date="1997" name="Nature">
        <title>The complete genome sequence of the hyperthermophilic, sulphate-reducing archaeon Archaeoglobus fulgidus.</title>
        <authorList>
            <person name="Klenk H.-P."/>
            <person name="Clayton R.A."/>
            <person name="Tomb J.-F."/>
            <person name="White O."/>
            <person name="Nelson K.E."/>
            <person name="Ketchum K.A."/>
            <person name="Dodson R.J."/>
            <person name="Gwinn M.L."/>
            <person name="Hickey E.K."/>
            <person name="Peterson J.D."/>
            <person name="Richardson D.L."/>
            <person name="Kerlavage A.R."/>
            <person name="Graham D.E."/>
            <person name="Kyrpides N.C."/>
            <person name="Fleischmann R.D."/>
            <person name="Quackenbush J."/>
            <person name="Lee N.H."/>
            <person name="Sutton G.G."/>
            <person name="Gill S.R."/>
            <person name="Kirkness E.F."/>
            <person name="Dougherty B.A."/>
            <person name="McKenney K."/>
            <person name="Adams M.D."/>
            <person name="Loftus B.J."/>
            <person name="Peterson S.N."/>
            <person name="Reich C.I."/>
            <person name="McNeil L.K."/>
            <person name="Badger J.H."/>
            <person name="Glodek A."/>
            <person name="Zhou L."/>
            <person name="Overbeek R."/>
            <person name="Gocayne J.D."/>
            <person name="Weidman J.F."/>
            <person name="McDonald L.A."/>
            <person name="Utterback T.R."/>
            <person name="Cotton M.D."/>
            <person name="Spriggs T."/>
            <person name="Artiach P."/>
            <person name="Kaine B.P."/>
            <person name="Sykes S.M."/>
            <person name="Sadow P.W."/>
            <person name="D'Andrea K.P."/>
            <person name="Bowman C."/>
            <person name="Fujii C."/>
            <person name="Garland S.A."/>
            <person name="Mason T.M."/>
            <person name="Olsen G.J."/>
            <person name="Fraser C.M."/>
            <person name="Smith H.O."/>
            <person name="Woese C.R."/>
            <person name="Venter J.C."/>
        </authorList>
    </citation>
    <scope>NUCLEOTIDE SEQUENCE [LARGE SCALE GENOMIC DNA]</scope>
    <source>
        <strain>ATCC 49558 / DSM 4304 / JCM 9628 / NBRC 100126 / VC-16</strain>
    </source>
</reference>
<evidence type="ECO:0000255" key="1">
    <source>
        <dbReference type="PROSITE-ProRule" id="PRU01076"/>
    </source>
</evidence>
<keyword id="KW-0238">DNA-binding</keyword>
<keyword id="KW-1185">Reference proteome</keyword>
<accession>O29774</accession>
<organism>
    <name type="scientific">Archaeoglobus fulgidus (strain ATCC 49558 / DSM 4304 / JCM 9628 / NBRC 100126 / VC-16)</name>
    <dbReference type="NCBI Taxonomy" id="224325"/>
    <lineage>
        <taxon>Archaea</taxon>
        <taxon>Methanobacteriati</taxon>
        <taxon>Methanobacteriota</taxon>
        <taxon>Archaeoglobi</taxon>
        <taxon>Archaeoglobales</taxon>
        <taxon>Archaeoglobaceae</taxon>
        <taxon>Archaeoglobus</taxon>
    </lineage>
</organism>
<name>Y476_ARCFU</name>
<protein>
    <recommendedName>
        <fullName>Uncharacterized protein AF_0476</fullName>
    </recommendedName>
</protein>
<proteinExistence type="predicted"/>
<dbReference type="EMBL" id="AE000782">
    <property type="protein sequence ID" value="AAB90765.1"/>
    <property type="molecule type" value="Genomic_DNA"/>
</dbReference>
<dbReference type="PIR" id="D69309">
    <property type="entry name" value="D69309"/>
</dbReference>
<dbReference type="STRING" id="224325.AF_0476"/>
<dbReference type="PaxDb" id="224325-AF_0476"/>
<dbReference type="EnsemblBacteria" id="AAB90765">
    <property type="protein sequence ID" value="AAB90765"/>
    <property type="gene ID" value="AF_0476"/>
</dbReference>
<dbReference type="KEGG" id="afu:AF_0476"/>
<dbReference type="eggNOG" id="arCOG00822">
    <property type="taxonomic scope" value="Archaea"/>
</dbReference>
<dbReference type="HOGENOM" id="CLU_158484_4_2_2"/>
<dbReference type="OrthoDB" id="30861at2157"/>
<dbReference type="Proteomes" id="UP000002199">
    <property type="component" value="Chromosome"/>
</dbReference>
<dbReference type="GO" id="GO:0003677">
    <property type="term" value="F:DNA binding"/>
    <property type="evidence" value="ECO:0007669"/>
    <property type="project" value="UniProtKB-KW"/>
</dbReference>
<dbReference type="Gene3D" id="2.10.260.10">
    <property type="match status" value="1"/>
</dbReference>
<dbReference type="InterPro" id="IPR007159">
    <property type="entry name" value="SpoVT-AbrB_dom"/>
</dbReference>
<dbReference type="InterPro" id="IPR037914">
    <property type="entry name" value="SpoVT-AbrB_sf"/>
</dbReference>
<dbReference type="NCBIfam" id="TIGR01439">
    <property type="entry name" value="lp_hng_hel_AbrB"/>
    <property type="match status" value="1"/>
</dbReference>
<dbReference type="NCBIfam" id="NF040962">
    <property type="entry name" value="near_HgcAB"/>
    <property type="match status" value="1"/>
</dbReference>
<dbReference type="Pfam" id="PF04014">
    <property type="entry name" value="MazE_antitoxin"/>
    <property type="match status" value="1"/>
</dbReference>
<dbReference type="SMART" id="SM00966">
    <property type="entry name" value="SpoVT_AbrB"/>
    <property type="match status" value="1"/>
</dbReference>
<dbReference type="SUPFAM" id="SSF89447">
    <property type="entry name" value="AbrB/MazE/MraZ-like"/>
    <property type="match status" value="1"/>
</dbReference>
<dbReference type="PROSITE" id="PS51740">
    <property type="entry name" value="SPOVT_ABRB"/>
    <property type="match status" value="1"/>
</dbReference>
<sequence length="79" mass="8543">MKSCKATKIEAVLTMDSKGQILLPKELRERAGLKAGDRLVAIAGCDENEEVCCLILVKAELVDEEMRSIIAPMLKGVVG</sequence>